<reference key="1">
    <citation type="journal article" date="2009" name="Toxicon">
        <title>Purification, characterization, and cDNA cloning of acidic platelet aggregation inhibiting phospholipases A(2) from the snake venom of Vipera lebetina (Levantine viper).</title>
        <authorList>
            <person name="Vija H."/>
            <person name="Samel M."/>
            <person name="Siigur E."/>
            <person name="Aaspollu A."/>
            <person name="Trummal K."/>
            <person name="Tonismagi K."/>
            <person name="Subbi J."/>
            <person name="Siigur J."/>
        </authorList>
    </citation>
    <scope>NUCLEOTIDE SEQUENCE [MRNA]</scope>
    <scope>FUNCTION</scope>
    <scope>BIOPHYSICOCHEMICAL PROPERTIES</scope>
    <scope>SUBUNIT</scope>
    <scope>MASS SPECTROMETRY</scope>
    <scope>IDENTIFICATION BY MASS SPECTROMETRY</scope>
    <source>
        <tissue>Venom</tissue>
        <tissue>Venom gland</tissue>
    </source>
</reference>
<protein>
    <recommendedName>
        <fullName>Acidic phospholipase A2 1</fullName>
        <shortName>Vl-PLA2-1</shortName>
        <shortName>svPLA2</shortName>
        <ecNumber>3.1.1.4</ecNumber>
    </recommendedName>
    <alternativeName>
        <fullName>Phosphatidylcholine 2-acylhydrolase</fullName>
    </alternativeName>
</protein>
<dbReference type="EC" id="3.1.1.4"/>
<dbReference type="EMBL" id="FJ905321">
    <property type="protein sequence ID" value="ACQ57801.1"/>
    <property type="molecule type" value="mRNA"/>
</dbReference>
<dbReference type="SMR" id="C3W4R6"/>
<dbReference type="GO" id="GO:0005576">
    <property type="term" value="C:extracellular region"/>
    <property type="evidence" value="ECO:0007669"/>
    <property type="project" value="UniProtKB-SubCell"/>
</dbReference>
<dbReference type="GO" id="GO:0005509">
    <property type="term" value="F:calcium ion binding"/>
    <property type="evidence" value="ECO:0007669"/>
    <property type="project" value="InterPro"/>
</dbReference>
<dbReference type="GO" id="GO:0047498">
    <property type="term" value="F:calcium-dependent phospholipase A2 activity"/>
    <property type="evidence" value="ECO:0007669"/>
    <property type="project" value="TreeGrafter"/>
</dbReference>
<dbReference type="GO" id="GO:0005543">
    <property type="term" value="F:phospholipid binding"/>
    <property type="evidence" value="ECO:0007669"/>
    <property type="project" value="TreeGrafter"/>
</dbReference>
<dbReference type="GO" id="GO:0090729">
    <property type="term" value="F:toxin activity"/>
    <property type="evidence" value="ECO:0007669"/>
    <property type="project" value="UniProtKB-KW"/>
</dbReference>
<dbReference type="GO" id="GO:0050482">
    <property type="term" value="P:arachidonate secretion"/>
    <property type="evidence" value="ECO:0007669"/>
    <property type="project" value="InterPro"/>
</dbReference>
<dbReference type="GO" id="GO:0016042">
    <property type="term" value="P:lipid catabolic process"/>
    <property type="evidence" value="ECO:0007669"/>
    <property type="project" value="UniProtKB-KW"/>
</dbReference>
<dbReference type="GO" id="GO:0042130">
    <property type="term" value="P:negative regulation of T cell proliferation"/>
    <property type="evidence" value="ECO:0007669"/>
    <property type="project" value="TreeGrafter"/>
</dbReference>
<dbReference type="GO" id="GO:0006644">
    <property type="term" value="P:phospholipid metabolic process"/>
    <property type="evidence" value="ECO:0007669"/>
    <property type="project" value="InterPro"/>
</dbReference>
<dbReference type="CDD" id="cd00125">
    <property type="entry name" value="PLA2c"/>
    <property type="match status" value="1"/>
</dbReference>
<dbReference type="FunFam" id="1.20.90.10:FF:000001">
    <property type="entry name" value="Basic phospholipase A2 homolog"/>
    <property type="match status" value="1"/>
</dbReference>
<dbReference type="Gene3D" id="1.20.90.10">
    <property type="entry name" value="Phospholipase A2 domain"/>
    <property type="match status" value="1"/>
</dbReference>
<dbReference type="InterPro" id="IPR001211">
    <property type="entry name" value="PLipase_A2"/>
</dbReference>
<dbReference type="InterPro" id="IPR033112">
    <property type="entry name" value="PLipase_A2_Asp_AS"/>
</dbReference>
<dbReference type="InterPro" id="IPR016090">
    <property type="entry name" value="PLipase_A2_dom"/>
</dbReference>
<dbReference type="InterPro" id="IPR036444">
    <property type="entry name" value="PLipase_A2_dom_sf"/>
</dbReference>
<dbReference type="InterPro" id="IPR033113">
    <property type="entry name" value="PLipase_A2_His_AS"/>
</dbReference>
<dbReference type="PANTHER" id="PTHR11716">
    <property type="entry name" value="PHOSPHOLIPASE A2 FAMILY MEMBER"/>
    <property type="match status" value="1"/>
</dbReference>
<dbReference type="PANTHER" id="PTHR11716:SF9">
    <property type="entry name" value="PHOSPHOLIPASE A2, MEMBRANE ASSOCIATED"/>
    <property type="match status" value="1"/>
</dbReference>
<dbReference type="Pfam" id="PF00068">
    <property type="entry name" value="Phospholip_A2_1"/>
    <property type="match status" value="1"/>
</dbReference>
<dbReference type="PRINTS" id="PR00389">
    <property type="entry name" value="PHPHLIPASEA2"/>
</dbReference>
<dbReference type="SMART" id="SM00085">
    <property type="entry name" value="PA2c"/>
    <property type="match status" value="1"/>
</dbReference>
<dbReference type="SUPFAM" id="SSF48619">
    <property type="entry name" value="Phospholipase A2, PLA2"/>
    <property type="match status" value="1"/>
</dbReference>
<dbReference type="PROSITE" id="PS00119">
    <property type="entry name" value="PA2_ASP"/>
    <property type="match status" value="1"/>
</dbReference>
<dbReference type="PROSITE" id="PS00118">
    <property type="entry name" value="PA2_HIS"/>
    <property type="match status" value="1"/>
</dbReference>
<accession>C3W4R6</accession>
<proteinExistence type="evidence at protein level"/>
<name>PA2A1_MACLB</name>
<evidence type="ECO:0000250" key="1"/>
<evidence type="ECO:0000255" key="2">
    <source>
        <dbReference type="PROSITE-ProRule" id="PRU10035"/>
    </source>
</evidence>
<evidence type="ECO:0000255" key="3">
    <source>
        <dbReference type="PROSITE-ProRule" id="PRU10036"/>
    </source>
</evidence>
<evidence type="ECO:0000269" key="4">
    <source>
    </source>
</evidence>
<evidence type="ECO:0000305" key="5"/>
<feature type="signal peptide" evidence="1">
    <location>
        <begin position="1"/>
        <end position="16"/>
    </location>
</feature>
<feature type="chain" id="PRO_0000418586" description="Acidic phospholipase A2 1">
    <location>
        <begin position="17"/>
        <end position="138"/>
    </location>
</feature>
<feature type="active site" evidence="1">
    <location>
        <position position="63"/>
    </location>
</feature>
<feature type="active site" evidence="1">
    <location>
        <position position="105"/>
    </location>
</feature>
<feature type="binding site" evidence="1">
    <location>
        <position position="43"/>
    </location>
    <ligand>
        <name>Ca(2+)</name>
        <dbReference type="ChEBI" id="CHEBI:29108"/>
    </ligand>
</feature>
<feature type="binding site" evidence="1">
    <location>
        <position position="45"/>
    </location>
    <ligand>
        <name>Ca(2+)</name>
        <dbReference type="ChEBI" id="CHEBI:29108"/>
    </ligand>
</feature>
<feature type="binding site" evidence="1">
    <location>
        <position position="47"/>
    </location>
    <ligand>
        <name>Ca(2+)</name>
        <dbReference type="ChEBI" id="CHEBI:29108"/>
    </ligand>
</feature>
<feature type="binding site" evidence="1">
    <location>
        <position position="64"/>
    </location>
    <ligand>
        <name>Ca(2+)</name>
        <dbReference type="ChEBI" id="CHEBI:29108"/>
    </ligand>
</feature>
<feature type="disulfide bond" evidence="1">
    <location>
        <begin position="42"/>
        <end position="131"/>
    </location>
</feature>
<feature type="disulfide bond" evidence="1">
    <location>
        <begin position="44"/>
        <end position="60"/>
    </location>
</feature>
<feature type="disulfide bond" evidence="1">
    <location>
        <begin position="59"/>
        <end position="111"/>
    </location>
</feature>
<feature type="disulfide bond" evidence="1">
    <location>
        <begin position="65"/>
        <end position="138"/>
    </location>
</feature>
<feature type="disulfide bond" evidence="1">
    <location>
        <begin position="66"/>
        <end position="104"/>
    </location>
</feature>
<feature type="disulfide bond" evidence="1">
    <location>
        <begin position="73"/>
        <end position="97"/>
    </location>
</feature>
<feature type="disulfide bond" evidence="1">
    <location>
        <begin position="91"/>
        <end position="102"/>
    </location>
</feature>
<sequence length="138" mass="15550">MRTLWIVAVWLMGVEGDLSQFGDMINKKTGTFGLFSYIYYGCYCGWGGKGKPQDATDRCCFVHDCCYGSVNGCDPKLSTYSYSFQNGDIVCGDDDPCLRAVCECDRVAAICFGENMNTYDKKYMLYSLFDCKEESEKC</sequence>
<organism>
    <name type="scientific">Macrovipera lebetinus</name>
    <name type="common">Levantine viper</name>
    <name type="synonym">Vipera lebetina</name>
    <dbReference type="NCBI Taxonomy" id="3148341"/>
    <lineage>
        <taxon>Eukaryota</taxon>
        <taxon>Metazoa</taxon>
        <taxon>Chordata</taxon>
        <taxon>Craniata</taxon>
        <taxon>Vertebrata</taxon>
        <taxon>Euteleostomi</taxon>
        <taxon>Lepidosauria</taxon>
        <taxon>Squamata</taxon>
        <taxon>Bifurcata</taxon>
        <taxon>Unidentata</taxon>
        <taxon>Episquamata</taxon>
        <taxon>Toxicofera</taxon>
        <taxon>Serpentes</taxon>
        <taxon>Colubroidea</taxon>
        <taxon>Viperidae</taxon>
        <taxon>Viperinae</taxon>
        <taxon>Macrovipera</taxon>
    </lineage>
</organism>
<keyword id="KW-0106">Calcium</keyword>
<keyword id="KW-1015">Disulfide bond</keyword>
<keyword id="KW-1199">Hemostasis impairing toxin</keyword>
<keyword id="KW-0378">Hydrolase</keyword>
<keyword id="KW-0442">Lipid degradation</keyword>
<keyword id="KW-0443">Lipid metabolism</keyword>
<keyword id="KW-0479">Metal-binding</keyword>
<keyword id="KW-1201">Platelet aggregation inhibiting toxin</keyword>
<keyword id="KW-0964">Secreted</keyword>
<keyword id="KW-0732">Signal</keyword>
<keyword id="KW-0800">Toxin</keyword>
<comment type="function">
    <text evidence="4">Snake venom phospholipase that inhibits ADP- and collagen-induced human platelet aggregation. This inhibition is completely inhibited by abolition of catalytic activity in case of collagen as inducer and partially inhibited in case of ADP as inducer. PLA2 catalyzes the calcium-dependent hydrolysis of the 2-acyl groups in 3-sn-phosphoglycerides.</text>
</comment>
<comment type="catalytic activity">
    <reaction evidence="2 3">
        <text>a 1,2-diacyl-sn-glycero-3-phosphocholine + H2O = a 1-acyl-sn-glycero-3-phosphocholine + a fatty acid + H(+)</text>
        <dbReference type="Rhea" id="RHEA:15801"/>
        <dbReference type="ChEBI" id="CHEBI:15377"/>
        <dbReference type="ChEBI" id="CHEBI:15378"/>
        <dbReference type="ChEBI" id="CHEBI:28868"/>
        <dbReference type="ChEBI" id="CHEBI:57643"/>
        <dbReference type="ChEBI" id="CHEBI:58168"/>
        <dbReference type="EC" id="3.1.1.4"/>
    </reaction>
</comment>
<comment type="cofactor">
    <cofactor evidence="1">
        <name>Ca(2+)</name>
        <dbReference type="ChEBI" id="CHEBI:29108"/>
    </cofactor>
    <text evidence="1">Binds 1 Ca(2+) ion.</text>
</comment>
<comment type="biophysicochemical properties">
    <kinetics>
        <Vmax evidence="4">676.0 umol/min/mg enzyme</Vmax>
    </kinetics>
</comment>
<comment type="subunit">
    <text evidence="4">Monomer.</text>
</comment>
<comment type="subcellular location">
    <subcellularLocation>
        <location>Secreted</location>
    </subcellularLocation>
</comment>
<comment type="tissue specificity">
    <text>Expressed by the venom gland.</text>
</comment>
<comment type="mass spectrometry" mass="13704.0" method="MALDI" evidence="4"/>
<comment type="similarity">
    <text evidence="5">Belongs to the phospholipase A2 family. Group II subfamily. D49 sub-subfamily.</text>
</comment>